<keyword id="KW-0963">Cytoplasm</keyword>
<keyword id="KW-0903">Direct protein sequencing</keyword>
<keyword id="KW-0349">Heme</keyword>
<keyword id="KW-0408">Iron</keyword>
<keyword id="KW-0409">Iron storage</keyword>
<keyword id="KW-0479">Metal-binding</keyword>
<organism>
    <name type="scientific">Neisseria gonorrhoeae</name>
    <dbReference type="NCBI Taxonomy" id="485"/>
    <lineage>
        <taxon>Bacteria</taxon>
        <taxon>Pseudomonadati</taxon>
        <taxon>Pseudomonadota</taxon>
        <taxon>Betaproteobacteria</taxon>
        <taxon>Neisseriales</taxon>
        <taxon>Neisseriaceae</taxon>
        <taxon>Neisseria</taxon>
    </lineage>
</organism>
<evidence type="ECO:0000250" key="1">
    <source>
        <dbReference type="UniProtKB" id="Q9HY79"/>
    </source>
</evidence>
<evidence type="ECO:0000255" key="2">
    <source>
        <dbReference type="PROSITE-ProRule" id="PRU00085"/>
    </source>
</evidence>
<evidence type="ECO:0000269" key="3">
    <source>
    </source>
</evidence>
<evidence type="ECO:0000303" key="4">
    <source>
    </source>
</evidence>
<evidence type="ECO:0000305" key="5"/>
<dbReference type="EMBL" id="U76634">
    <property type="protein sequence ID" value="AAB18969.1"/>
    <property type="molecule type" value="Genomic_DNA"/>
</dbReference>
<dbReference type="SMR" id="P77914"/>
<dbReference type="GO" id="GO:0005829">
    <property type="term" value="C:cytosol"/>
    <property type="evidence" value="ECO:0007669"/>
    <property type="project" value="TreeGrafter"/>
</dbReference>
<dbReference type="GO" id="GO:0008199">
    <property type="term" value="F:ferric iron binding"/>
    <property type="evidence" value="ECO:0007669"/>
    <property type="project" value="InterPro"/>
</dbReference>
<dbReference type="GO" id="GO:0004322">
    <property type="term" value="F:ferroxidase activity"/>
    <property type="evidence" value="ECO:0007669"/>
    <property type="project" value="TreeGrafter"/>
</dbReference>
<dbReference type="GO" id="GO:0020037">
    <property type="term" value="F:heme binding"/>
    <property type="evidence" value="ECO:0007669"/>
    <property type="project" value="TreeGrafter"/>
</dbReference>
<dbReference type="GO" id="GO:0006879">
    <property type="term" value="P:intracellular iron ion homeostasis"/>
    <property type="evidence" value="ECO:0007669"/>
    <property type="project" value="UniProtKB-KW"/>
</dbReference>
<dbReference type="GO" id="GO:0006826">
    <property type="term" value="P:iron ion transport"/>
    <property type="evidence" value="ECO:0007669"/>
    <property type="project" value="InterPro"/>
</dbReference>
<dbReference type="CDD" id="cd00907">
    <property type="entry name" value="Bacterioferritin"/>
    <property type="match status" value="1"/>
</dbReference>
<dbReference type="Gene3D" id="1.20.1260.10">
    <property type="match status" value="1"/>
</dbReference>
<dbReference type="InterPro" id="IPR002024">
    <property type="entry name" value="Bacterioferritin"/>
</dbReference>
<dbReference type="InterPro" id="IPR012347">
    <property type="entry name" value="Ferritin-like"/>
</dbReference>
<dbReference type="InterPro" id="IPR009040">
    <property type="entry name" value="Ferritin-like_diiron"/>
</dbReference>
<dbReference type="InterPro" id="IPR009078">
    <property type="entry name" value="Ferritin-like_SF"/>
</dbReference>
<dbReference type="InterPro" id="IPR008331">
    <property type="entry name" value="Ferritin_DPS_dom"/>
</dbReference>
<dbReference type="NCBIfam" id="TIGR00754">
    <property type="entry name" value="bfr"/>
    <property type="match status" value="1"/>
</dbReference>
<dbReference type="PANTHER" id="PTHR30295">
    <property type="entry name" value="BACTERIOFERRITIN"/>
    <property type="match status" value="1"/>
</dbReference>
<dbReference type="PANTHER" id="PTHR30295:SF0">
    <property type="entry name" value="BACTERIOFERRITIN"/>
    <property type="match status" value="1"/>
</dbReference>
<dbReference type="Pfam" id="PF00210">
    <property type="entry name" value="Ferritin"/>
    <property type="match status" value="1"/>
</dbReference>
<dbReference type="PIRSF" id="PIRSF002560">
    <property type="entry name" value="Bacterioferritin"/>
    <property type="match status" value="1"/>
</dbReference>
<dbReference type="PRINTS" id="PR00601">
    <property type="entry name" value="BACFERRITIN"/>
</dbReference>
<dbReference type="SUPFAM" id="SSF47240">
    <property type="entry name" value="Ferritin-like"/>
    <property type="match status" value="1"/>
</dbReference>
<dbReference type="PROSITE" id="PS00549">
    <property type="entry name" value="BACTERIOFERRITIN"/>
    <property type="match status" value="1"/>
</dbReference>
<dbReference type="PROSITE" id="PS50905">
    <property type="entry name" value="FERRITIN_LIKE"/>
    <property type="match status" value="1"/>
</dbReference>
<proteinExistence type="evidence at protein level"/>
<name>BFRB_NEIGO</name>
<comment type="function">
    <text evidence="3">Iron-storage protein (PubMed:10537219). Plays a role in protection against iron-mediated oxidative stress (PubMed:10537219).</text>
</comment>
<comment type="cofactor">
    <cofactor evidence="1">
        <name>heme b</name>
        <dbReference type="ChEBI" id="CHEBI:60344"/>
    </cofactor>
    <text evidence="1">Binds 1 heme b (iron(II)-protoporphyrin IX) group per dimer.</text>
</comment>
<comment type="subunit">
    <text evidence="3">Forms a bacterioferritin (BFR) complex with BfrA (PubMed:10537219). Heterooligomer of 24 subunits, arranged as 12 dimers, that are packed together to form an approximately spherical molecule with a central cavity, in which large amounts of iron can be deposited.</text>
</comment>
<comment type="subcellular location">
    <subcellularLocation>
        <location evidence="3">Cytoplasm</location>
    </subcellularLocation>
</comment>
<comment type="disruption phenotype">
    <text evidence="3">Grows less well under iron-limiting conditions, increased sensitivity to H(2)O(2) and paraquat (PubMed:10537219).</text>
</comment>
<comment type="similarity">
    <text evidence="5">Belongs to the bacterioferritin family.</text>
</comment>
<feature type="chain" id="PRO_0000192606" description="Bacterioferritin BfrB">
    <location>
        <begin position="1"/>
        <end position="157"/>
    </location>
</feature>
<feature type="domain" description="Ferritin-like diiron" evidence="2">
    <location>
        <begin position="1"/>
        <end position="145"/>
    </location>
</feature>
<feature type="binding site" evidence="2">
    <location>
        <position position="51"/>
    </location>
    <ligand>
        <name>Fe cation</name>
        <dbReference type="ChEBI" id="CHEBI:24875"/>
    </ligand>
</feature>
<feature type="binding site" description="axial binding residue" evidence="2">
    <location>
        <position position="52"/>
    </location>
    <ligand>
        <name>heme b</name>
        <dbReference type="ChEBI" id="CHEBI:60344"/>
        <note>ligand shared between dimeric partners</note>
    </ligand>
    <ligandPart>
        <name>Fe</name>
        <dbReference type="ChEBI" id="CHEBI:18248"/>
    </ligandPart>
</feature>
<feature type="binding site" evidence="2">
    <location>
        <position position="94"/>
    </location>
    <ligand>
        <name>Fe cation</name>
        <dbReference type="ChEBI" id="CHEBI:24875"/>
    </ligand>
</feature>
<feature type="binding site" evidence="2">
    <location>
        <position position="130"/>
    </location>
    <ligand>
        <name>Fe cation</name>
        <dbReference type="ChEBI" id="CHEBI:24875"/>
    </ligand>
</feature>
<sequence length="157" mass="18015">MKGDRLVIRELNKNLGLLLVTINQYFLHARILKNWGFEELGEHFFKQSIVEMKAADDLIERILFLEGLPNLQELGKLLIGESTEEIIACDLTKEQEKHEALLAAIATAEAQQDYVSRDLLEKQKDTNEKHIDWLETQQELIGKIGLPNYLQTAAQED</sequence>
<gene>
    <name evidence="4" type="primary">bfrB</name>
</gene>
<protein>
    <recommendedName>
        <fullName evidence="4">Bacterioferritin BfrB</fullName>
        <shortName>BFR B</shortName>
    </recommendedName>
</protein>
<reference key="1">
    <citation type="journal article" date="1999" name="Microbiology">
        <title>Neisseria gonorrhoeae bacterioferritin: structural heterogeneity, involvement in iron storage and protection against oxidative stress.</title>
        <authorList>
            <person name="Chen C.Y."/>
            <person name="Morse S.A."/>
        </authorList>
    </citation>
    <scope>NUCLEOTIDE SEQUENCE [GENOMIC DNA]</scope>
    <scope>PROTEIN SEQUENCE OF 1-15</scope>
    <scope>FUNCTION</scope>
    <scope>SUBUNIT</scope>
    <scope>SUBCELLULAR LOCATION</scope>
    <scope>DISRUPTION PHENOTYPE</scope>
    <source>
        <strain>ATCC 33084 / F62 / M-1914</strain>
    </source>
</reference>
<accession>P77914</accession>